<dbReference type="EC" id="3.1.6.4"/>
<dbReference type="EMBL" id="AF111346">
    <property type="protein sequence ID" value="AAF63155.1"/>
    <property type="molecule type" value="mRNA"/>
</dbReference>
<dbReference type="EMBL" id="AF112242">
    <property type="protein sequence ID" value="AAF63858.1"/>
    <property type="molecule type" value="Genomic_DNA"/>
</dbReference>
<dbReference type="EMBL" id="AF112230">
    <property type="protein sequence ID" value="AAF63858.1"/>
    <property type="status" value="JOINED"/>
    <property type="molecule type" value="Genomic_DNA"/>
</dbReference>
<dbReference type="EMBL" id="AF112231">
    <property type="protein sequence ID" value="AAF63858.1"/>
    <property type="status" value="JOINED"/>
    <property type="molecule type" value="Genomic_DNA"/>
</dbReference>
<dbReference type="EMBL" id="AF112233">
    <property type="protein sequence ID" value="AAF63858.1"/>
    <property type="status" value="JOINED"/>
    <property type="molecule type" value="Genomic_DNA"/>
</dbReference>
<dbReference type="EMBL" id="AF112232">
    <property type="protein sequence ID" value="AAF63858.1"/>
    <property type="status" value="JOINED"/>
    <property type="molecule type" value="Genomic_DNA"/>
</dbReference>
<dbReference type="EMBL" id="AF112234">
    <property type="protein sequence ID" value="AAF63858.1"/>
    <property type="status" value="JOINED"/>
    <property type="molecule type" value="Genomic_DNA"/>
</dbReference>
<dbReference type="EMBL" id="AF112235">
    <property type="protein sequence ID" value="AAF63858.1"/>
    <property type="status" value="JOINED"/>
    <property type="molecule type" value="Genomic_DNA"/>
</dbReference>
<dbReference type="EMBL" id="AF112236">
    <property type="protein sequence ID" value="AAF63858.1"/>
    <property type="status" value="JOINED"/>
    <property type="molecule type" value="Genomic_DNA"/>
</dbReference>
<dbReference type="EMBL" id="AF112237">
    <property type="protein sequence ID" value="AAF63858.1"/>
    <property type="status" value="JOINED"/>
    <property type="molecule type" value="Genomic_DNA"/>
</dbReference>
<dbReference type="EMBL" id="AF112238">
    <property type="protein sequence ID" value="AAF63858.1"/>
    <property type="status" value="JOINED"/>
    <property type="molecule type" value="Genomic_DNA"/>
</dbReference>
<dbReference type="EMBL" id="AF112239">
    <property type="protein sequence ID" value="AAF63858.1"/>
    <property type="status" value="JOINED"/>
    <property type="molecule type" value="Genomic_DNA"/>
</dbReference>
<dbReference type="EMBL" id="AF112240">
    <property type="protein sequence ID" value="AAF63858.1"/>
    <property type="status" value="JOINED"/>
    <property type="molecule type" value="Genomic_DNA"/>
</dbReference>
<dbReference type="EMBL" id="AF112241">
    <property type="protein sequence ID" value="AAF63858.1"/>
    <property type="status" value="JOINED"/>
    <property type="molecule type" value="Genomic_DNA"/>
</dbReference>
<dbReference type="EMBL" id="AK220245">
    <property type="protein sequence ID" value="BAD90170.1"/>
    <property type="status" value="ALT_INIT"/>
    <property type="molecule type" value="mRNA"/>
</dbReference>
<dbReference type="EMBL" id="AK159592">
    <property type="protein sequence ID" value="BAE35212.1"/>
    <property type="molecule type" value="mRNA"/>
</dbReference>
<dbReference type="EMBL" id="BC004002">
    <property type="protein sequence ID" value="AAH04002.1"/>
    <property type="molecule type" value="mRNA"/>
</dbReference>
<dbReference type="CCDS" id="CCDS40504.1"/>
<dbReference type="RefSeq" id="NP_001180574.1">
    <property type="nucleotide sequence ID" value="NM_001193645.1"/>
</dbReference>
<dbReference type="RefSeq" id="NP_057931.3">
    <property type="nucleotide sequence ID" value="NM_016722.4"/>
</dbReference>
<dbReference type="SMR" id="Q571E4"/>
<dbReference type="BioGRID" id="206156">
    <property type="interactions" value="2"/>
</dbReference>
<dbReference type="FunCoup" id="Q571E4">
    <property type="interactions" value="447"/>
</dbReference>
<dbReference type="STRING" id="10090.ENSMUSP00000015171"/>
<dbReference type="GlyConnect" id="2525">
    <property type="glycosylation" value="3 N-Linked glycans (2 sites)"/>
</dbReference>
<dbReference type="GlyCosmos" id="Q571E4">
    <property type="glycosylation" value="2 sites, 3 glycans"/>
</dbReference>
<dbReference type="GlyGen" id="Q571E4">
    <property type="glycosylation" value="2 sites, 4 N-linked glycans (2 sites)"/>
</dbReference>
<dbReference type="iPTMnet" id="Q571E4"/>
<dbReference type="PhosphoSitePlus" id="Q571E4"/>
<dbReference type="jPOST" id="Q571E4"/>
<dbReference type="PaxDb" id="10090-ENSMUSP00000015171"/>
<dbReference type="PeptideAtlas" id="Q571E4"/>
<dbReference type="ProteomicsDB" id="273414"/>
<dbReference type="Pumba" id="Q571E4"/>
<dbReference type="Antibodypedia" id="30794">
    <property type="antibodies" value="323 antibodies from 35 providers"/>
</dbReference>
<dbReference type="DNASU" id="50917"/>
<dbReference type="Ensembl" id="ENSMUST00000015171.11">
    <property type="protein sequence ID" value="ENSMUSP00000015171.10"/>
    <property type="gene ID" value="ENSMUSG00000015027.12"/>
</dbReference>
<dbReference type="GeneID" id="50917"/>
<dbReference type="KEGG" id="mmu:50917"/>
<dbReference type="UCSC" id="uc012gmh.1">
    <property type="organism name" value="mouse"/>
</dbReference>
<dbReference type="AGR" id="MGI:1355303"/>
<dbReference type="CTD" id="2588"/>
<dbReference type="MGI" id="MGI:1355303">
    <property type="gene designation" value="Galns"/>
</dbReference>
<dbReference type="VEuPathDB" id="HostDB:ENSMUSG00000015027"/>
<dbReference type="eggNOG" id="KOG3867">
    <property type="taxonomic scope" value="Eukaryota"/>
</dbReference>
<dbReference type="GeneTree" id="ENSGT00940000157787"/>
<dbReference type="HOGENOM" id="CLU_006332_13_5_1"/>
<dbReference type="InParanoid" id="Q571E4"/>
<dbReference type="OMA" id="VIVQQHK"/>
<dbReference type="OrthoDB" id="103349at2759"/>
<dbReference type="PhylomeDB" id="Q571E4"/>
<dbReference type="TreeFam" id="TF314186"/>
<dbReference type="BRENDA" id="3.1.6.4">
    <property type="organism ID" value="3474"/>
</dbReference>
<dbReference type="Reactome" id="R-MMU-2022857">
    <property type="pathway name" value="Keratan sulfate degradation"/>
</dbReference>
<dbReference type="Reactome" id="R-MMU-6798695">
    <property type="pathway name" value="Neutrophil degranulation"/>
</dbReference>
<dbReference type="BioGRID-ORCS" id="50917">
    <property type="hits" value="5 hits in 77 CRISPR screens"/>
</dbReference>
<dbReference type="ChiTaRS" id="Galns">
    <property type="organism name" value="mouse"/>
</dbReference>
<dbReference type="PRO" id="PR:Q571E4"/>
<dbReference type="Proteomes" id="UP000000589">
    <property type="component" value="Chromosome 8"/>
</dbReference>
<dbReference type="RNAct" id="Q571E4">
    <property type="molecule type" value="protein"/>
</dbReference>
<dbReference type="Bgee" id="ENSMUSG00000015027">
    <property type="expression patterns" value="Expressed in placenta labyrinth and 199 other cell types or tissues"/>
</dbReference>
<dbReference type="ExpressionAtlas" id="Q571E4">
    <property type="expression patterns" value="baseline and differential"/>
</dbReference>
<dbReference type="GO" id="GO:0005764">
    <property type="term" value="C:lysosome"/>
    <property type="evidence" value="ECO:0000315"/>
    <property type="project" value="MGI"/>
</dbReference>
<dbReference type="GO" id="GO:0046872">
    <property type="term" value="F:metal ion binding"/>
    <property type="evidence" value="ECO:0007669"/>
    <property type="project" value="UniProtKB-KW"/>
</dbReference>
<dbReference type="GO" id="GO:0043890">
    <property type="term" value="F:N-acetylgalactosamine-6-sulfatase activity"/>
    <property type="evidence" value="ECO:0000315"/>
    <property type="project" value="MGI"/>
</dbReference>
<dbReference type="GO" id="GO:0008484">
    <property type="term" value="F:sulfuric ester hydrolase activity"/>
    <property type="evidence" value="ECO:0000266"/>
    <property type="project" value="MGI"/>
</dbReference>
<dbReference type="GO" id="GO:0030207">
    <property type="term" value="P:chondroitin sulfate proteoglycan catabolic process"/>
    <property type="evidence" value="ECO:0000266"/>
    <property type="project" value="MGI"/>
</dbReference>
<dbReference type="CDD" id="cd16157">
    <property type="entry name" value="GALNS"/>
    <property type="match status" value="1"/>
</dbReference>
<dbReference type="FunFam" id="3.30.1120.10:FF:000004">
    <property type="entry name" value="Galactosamine (N-acetyl)-6-sulfatase"/>
    <property type="match status" value="1"/>
</dbReference>
<dbReference type="FunFam" id="3.40.720.10:FF:000021">
    <property type="entry name" value="Galactosamine (N-acetyl)-6-sulfatase"/>
    <property type="match status" value="1"/>
</dbReference>
<dbReference type="Gene3D" id="3.30.1120.10">
    <property type="match status" value="1"/>
</dbReference>
<dbReference type="Gene3D" id="3.40.720.10">
    <property type="entry name" value="Alkaline Phosphatase, subunit A"/>
    <property type="match status" value="1"/>
</dbReference>
<dbReference type="InterPro" id="IPR017850">
    <property type="entry name" value="Alkaline_phosphatase_core_sf"/>
</dbReference>
<dbReference type="InterPro" id="IPR035626">
    <property type="entry name" value="GALNS"/>
</dbReference>
<dbReference type="InterPro" id="IPR050738">
    <property type="entry name" value="Sulfatase"/>
</dbReference>
<dbReference type="InterPro" id="IPR024607">
    <property type="entry name" value="Sulfatase_CS"/>
</dbReference>
<dbReference type="InterPro" id="IPR000917">
    <property type="entry name" value="Sulfatase_N"/>
</dbReference>
<dbReference type="PANTHER" id="PTHR42693">
    <property type="entry name" value="ARYLSULFATASE FAMILY MEMBER"/>
    <property type="match status" value="1"/>
</dbReference>
<dbReference type="PANTHER" id="PTHR42693:SF47">
    <property type="entry name" value="N-ACETYLGALACTOSAMINE-6-SULFATASE"/>
    <property type="match status" value="1"/>
</dbReference>
<dbReference type="Pfam" id="PF00884">
    <property type="entry name" value="Sulfatase"/>
    <property type="match status" value="1"/>
</dbReference>
<dbReference type="Pfam" id="PF14707">
    <property type="entry name" value="Sulfatase_C"/>
    <property type="match status" value="1"/>
</dbReference>
<dbReference type="SUPFAM" id="SSF53649">
    <property type="entry name" value="Alkaline phosphatase-like"/>
    <property type="match status" value="1"/>
</dbReference>
<dbReference type="PROSITE" id="PS00523">
    <property type="entry name" value="SULFATASE_1"/>
    <property type="match status" value="1"/>
</dbReference>
<sequence length="520" mass="57673">MAACTAAQQLLLVLSALGLLAAGAPQPPNIVLLLMDDMGWGDLGVNGEPSRETPNLDRMAAEGMLFPSFYSANPLCSPSRAALLTGRLPIRNGFYTTNAHARNAYTPQEIMGGIPNSEHLLPELLKKAGYTNKIVGKWHLGHRPQFHPLKHGFDEWFGSPNCHFGPYDNKAKPNIPVYRDWEMVGRFYEEFPINRKTGEANLTQLYTQEALDFIQTQHARQSPFFLYWAIDATHAPVYASRQFLGTSLRGRYGDAVREIDDSVGKILSLLQNLGISKNTFVFFTSDNGAALISAPNEGGSNGPFLCGKQTTFEGGMREPAIAWWPGHIAAGQVSHQLGSIMDLFTTSLSLAGLKPPSDRVIDGLDLLPTMLKGQMMDRPIFYYRGNTLMAVTLGQYKAHLWTWTNSWEEFTQGTDFCPGQNVSGVTTHTQEEHTELPLIFHLGRDPGERFPLSFHSDEYQDALSRTTQVVQEHQKSLVPGQPQLNVCNQAVMNWAPPGCEKLGKCLTPPESVPEKCFWAH</sequence>
<comment type="catalytic activity">
    <reaction>
        <text>Hydrolysis of the 6-sulfate groups of the N-acetyl-D-galactosamine 6-sulfate units of chondroitin sulfate and of the D-galactose 6-sulfate units of keratan sulfate.</text>
        <dbReference type="EC" id="3.1.6.4"/>
    </reaction>
</comment>
<comment type="cofactor">
    <cofactor evidence="1">
        <name>Ca(2+)</name>
        <dbReference type="ChEBI" id="CHEBI:29108"/>
    </cofactor>
    <text evidence="1">Binds 1 Ca(2+) ion per subunit.</text>
</comment>
<comment type="subunit">
    <text evidence="1">Homodimer.</text>
</comment>
<comment type="subcellular location">
    <subcellularLocation>
        <location evidence="1">Lysosome</location>
    </subcellularLocation>
</comment>
<comment type="tissue specificity">
    <text evidence="4">Widely expressed. Higher expression in liver and kidney.</text>
</comment>
<comment type="PTM">
    <text evidence="1">The conversion to 3-oxoalanine (also known as C-formylglycine, FGly), of a serine or cysteine residue in prokaryotes and of a cysteine residue in eukaryotes, is critical for catalytic activity.</text>
</comment>
<comment type="similarity">
    <text evidence="5">Belongs to the sulfatase family.</text>
</comment>
<comment type="sequence caution" evidence="5">
    <conflict type="erroneous initiation">
        <sequence resource="EMBL-CDS" id="BAD90170"/>
    </conflict>
</comment>
<proteinExistence type="evidence at protein level"/>
<name>GALNS_MOUSE</name>
<feature type="signal peptide" evidence="1">
    <location>
        <begin position="1"/>
        <end position="23"/>
    </location>
</feature>
<feature type="chain" id="PRO_0000273148" description="N-acetylgalactosamine-6-sulfatase">
    <location>
        <begin position="24"/>
        <end position="520"/>
    </location>
</feature>
<feature type="region of interest" description="Catalytic domain" evidence="1">
    <location>
        <begin position="24"/>
        <end position="377"/>
    </location>
</feature>
<feature type="active site" description="Nucleophile" evidence="2">
    <location>
        <position position="76"/>
    </location>
</feature>
<feature type="active site" evidence="2">
    <location>
        <position position="139"/>
    </location>
</feature>
<feature type="binding site" evidence="1">
    <location>
        <position position="36"/>
    </location>
    <ligand>
        <name>Ca(2+)</name>
        <dbReference type="ChEBI" id="CHEBI:29108"/>
    </ligand>
</feature>
<feature type="binding site" evidence="1">
    <location>
        <position position="37"/>
    </location>
    <ligand>
        <name>Ca(2+)</name>
        <dbReference type="ChEBI" id="CHEBI:29108"/>
    </ligand>
</feature>
<feature type="binding site" description="via 3-oxoalanine" evidence="1">
    <location>
        <position position="76"/>
    </location>
    <ligand>
        <name>Ca(2+)</name>
        <dbReference type="ChEBI" id="CHEBI:29108"/>
    </ligand>
</feature>
<feature type="binding site" evidence="1">
    <location>
        <position position="286"/>
    </location>
    <ligand>
        <name>Ca(2+)</name>
        <dbReference type="ChEBI" id="CHEBI:29108"/>
    </ligand>
</feature>
<feature type="binding site" evidence="1">
    <location>
        <position position="287"/>
    </location>
    <ligand>
        <name>Ca(2+)</name>
        <dbReference type="ChEBI" id="CHEBI:29108"/>
    </ligand>
</feature>
<feature type="modified residue" description="3-oxoalanine (Cys)" evidence="2">
    <location>
        <position position="76"/>
    </location>
</feature>
<feature type="glycosylation site" description="N-linked (GlcNAc...) asparagine" evidence="3">
    <location>
        <position position="201"/>
    </location>
</feature>
<feature type="glycosylation site" description="N-linked (GlcNAc...) asparagine" evidence="3">
    <location>
        <position position="421"/>
    </location>
</feature>
<feature type="disulfide bond" evidence="1">
    <location>
        <begin position="306"/>
        <end position="417"/>
    </location>
</feature>
<feature type="disulfide bond" evidence="1">
    <location>
        <begin position="487"/>
        <end position="516"/>
    </location>
</feature>
<feature type="disulfide bond" evidence="1">
    <location>
        <begin position="499"/>
        <end position="505"/>
    </location>
</feature>
<feature type="sequence conflict" description="In Ref. 4; AAH04002." evidence="5" ref="4">
    <original>A</original>
    <variation>V</variation>
    <location>
        <position position="22"/>
    </location>
</feature>
<feature type="sequence conflict" description="In Ref. 1; AAF63858/AAF63155." evidence="5" ref="1">
    <original>D</original>
    <variation>N</variation>
    <location>
        <position position="154"/>
    </location>
</feature>
<feature type="sequence conflict" description="In Ref. 4; AAH04002." evidence="5" ref="4">
    <original>T</original>
    <variation>L</variation>
    <location>
        <position position="207"/>
    </location>
</feature>
<feature type="sequence conflict" description="In Ref. 4; AAH04002." evidence="5" ref="4">
    <original>Q</original>
    <variation>R</variation>
    <location>
        <position position="215"/>
    </location>
</feature>
<feature type="sequence conflict" description="In Ref. 4; AAH04002." evidence="5" ref="4">
    <original>S</original>
    <variation>G</variation>
    <location>
        <position position="222"/>
    </location>
</feature>
<feature type="sequence conflict" description="In Ref. 4; AAH04002." evidence="5" ref="4">
    <original>S</original>
    <variation>N</variation>
    <location>
        <position position="268"/>
    </location>
</feature>
<reference key="1">
    <citation type="journal article" date="2000" name="Biochim. Biophys. Acta">
        <title>The mouse N-acetylgalactosamine-6-sulfate sulfatase (Galns) gene: cDNA isolation, genomic characterization, chromosomal assignment and analysis of the 5'-flanking region.</title>
        <authorList>
            <person name="Montano A.M."/>
            <person name="Yamagishi A."/>
            <person name="Tomatsu S."/>
            <person name="Fukuda S."/>
            <person name="Copeland N.G."/>
            <person name="Orii K.E."/>
            <person name="Isogai K."/>
            <person name="Yamada N."/>
            <person name="Kato Z.I."/>
            <person name="Jenkins N.A."/>
            <person name="Gilbert D.J."/>
            <person name="Sukegawa K."/>
            <person name="Orii T."/>
            <person name="Kondo N."/>
        </authorList>
    </citation>
    <scope>NUCLEOTIDE SEQUENCE [GENOMIC DNA / MRNA]</scope>
    <scope>TISSUE SPECIFICITY</scope>
    <source>
        <strain>129/SvJ</strain>
        <strain>C57BL/6J</strain>
    </source>
</reference>
<reference key="2">
    <citation type="submission" date="2005-02" db="EMBL/GenBank/DDBJ databases">
        <title>Prediction of the coding sequences of mouse homologues of KIAA gene. The complete nucleotide sequences of mouse KIAA-homologous cDNAs identified by screening of terminal sequences of cDNA clones randomly sampled from size-fractionated libraries.</title>
        <authorList>
            <person name="Okazaki N."/>
            <person name="Kikuno R.F."/>
            <person name="Ohara R."/>
            <person name="Inamoto S."/>
            <person name="Seino S."/>
            <person name="Nishimura M."/>
            <person name="Nagase T."/>
            <person name="Ohara O."/>
            <person name="Koga H."/>
        </authorList>
    </citation>
    <scope>NUCLEOTIDE SEQUENCE [LARGE SCALE MRNA]</scope>
    <source>
        <tissue>Pancreatic islet</tissue>
    </source>
</reference>
<reference key="3">
    <citation type="journal article" date="2005" name="Science">
        <title>The transcriptional landscape of the mammalian genome.</title>
        <authorList>
            <person name="Carninci P."/>
            <person name="Kasukawa T."/>
            <person name="Katayama S."/>
            <person name="Gough J."/>
            <person name="Frith M.C."/>
            <person name="Maeda N."/>
            <person name="Oyama R."/>
            <person name="Ravasi T."/>
            <person name="Lenhard B."/>
            <person name="Wells C."/>
            <person name="Kodzius R."/>
            <person name="Shimokawa K."/>
            <person name="Bajic V.B."/>
            <person name="Brenner S.E."/>
            <person name="Batalov S."/>
            <person name="Forrest A.R."/>
            <person name="Zavolan M."/>
            <person name="Davis M.J."/>
            <person name="Wilming L.G."/>
            <person name="Aidinis V."/>
            <person name="Allen J.E."/>
            <person name="Ambesi-Impiombato A."/>
            <person name="Apweiler R."/>
            <person name="Aturaliya R.N."/>
            <person name="Bailey T.L."/>
            <person name="Bansal M."/>
            <person name="Baxter L."/>
            <person name="Beisel K.W."/>
            <person name="Bersano T."/>
            <person name="Bono H."/>
            <person name="Chalk A.M."/>
            <person name="Chiu K.P."/>
            <person name="Choudhary V."/>
            <person name="Christoffels A."/>
            <person name="Clutterbuck D.R."/>
            <person name="Crowe M.L."/>
            <person name="Dalla E."/>
            <person name="Dalrymple B.P."/>
            <person name="de Bono B."/>
            <person name="Della Gatta G."/>
            <person name="di Bernardo D."/>
            <person name="Down T."/>
            <person name="Engstrom P."/>
            <person name="Fagiolini M."/>
            <person name="Faulkner G."/>
            <person name="Fletcher C.F."/>
            <person name="Fukushima T."/>
            <person name="Furuno M."/>
            <person name="Futaki S."/>
            <person name="Gariboldi M."/>
            <person name="Georgii-Hemming P."/>
            <person name="Gingeras T.R."/>
            <person name="Gojobori T."/>
            <person name="Green R.E."/>
            <person name="Gustincich S."/>
            <person name="Harbers M."/>
            <person name="Hayashi Y."/>
            <person name="Hensch T.K."/>
            <person name="Hirokawa N."/>
            <person name="Hill D."/>
            <person name="Huminiecki L."/>
            <person name="Iacono M."/>
            <person name="Ikeo K."/>
            <person name="Iwama A."/>
            <person name="Ishikawa T."/>
            <person name="Jakt M."/>
            <person name="Kanapin A."/>
            <person name="Katoh M."/>
            <person name="Kawasawa Y."/>
            <person name="Kelso J."/>
            <person name="Kitamura H."/>
            <person name="Kitano H."/>
            <person name="Kollias G."/>
            <person name="Krishnan S.P."/>
            <person name="Kruger A."/>
            <person name="Kummerfeld S.K."/>
            <person name="Kurochkin I.V."/>
            <person name="Lareau L.F."/>
            <person name="Lazarevic D."/>
            <person name="Lipovich L."/>
            <person name="Liu J."/>
            <person name="Liuni S."/>
            <person name="McWilliam S."/>
            <person name="Madan Babu M."/>
            <person name="Madera M."/>
            <person name="Marchionni L."/>
            <person name="Matsuda H."/>
            <person name="Matsuzawa S."/>
            <person name="Miki H."/>
            <person name="Mignone F."/>
            <person name="Miyake S."/>
            <person name="Morris K."/>
            <person name="Mottagui-Tabar S."/>
            <person name="Mulder N."/>
            <person name="Nakano N."/>
            <person name="Nakauchi H."/>
            <person name="Ng P."/>
            <person name="Nilsson R."/>
            <person name="Nishiguchi S."/>
            <person name="Nishikawa S."/>
            <person name="Nori F."/>
            <person name="Ohara O."/>
            <person name="Okazaki Y."/>
            <person name="Orlando V."/>
            <person name="Pang K.C."/>
            <person name="Pavan W.J."/>
            <person name="Pavesi G."/>
            <person name="Pesole G."/>
            <person name="Petrovsky N."/>
            <person name="Piazza S."/>
            <person name="Reed J."/>
            <person name="Reid J.F."/>
            <person name="Ring B.Z."/>
            <person name="Ringwald M."/>
            <person name="Rost B."/>
            <person name="Ruan Y."/>
            <person name="Salzberg S.L."/>
            <person name="Sandelin A."/>
            <person name="Schneider C."/>
            <person name="Schoenbach C."/>
            <person name="Sekiguchi K."/>
            <person name="Semple C.A."/>
            <person name="Seno S."/>
            <person name="Sessa L."/>
            <person name="Sheng Y."/>
            <person name="Shibata Y."/>
            <person name="Shimada H."/>
            <person name="Shimada K."/>
            <person name="Silva D."/>
            <person name="Sinclair B."/>
            <person name="Sperling S."/>
            <person name="Stupka E."/>
            <person name="Sugiura K."/>
            <person name="Sultana R."/>
            <person name="Takenaka Y."/>
            <person name="Taki K."/>
            <person name="Tammoja K."/>
            <person name="Tan S.L."/>
            <person name="Tang S."/>
            <person name="Taylor M.S."/>
            <person name="Tegner J."/>
            <person name="Teichmann S.A."/>
            <person name="Ueda H.R."/>
            <person name="van Nimwegen E."/>
            <person name="Verardo R."/>
            <person name="Wei C.L."/>
            <person name="Yagi K."/>
            <person name="Yamanishi H."/>
            <person name="Zabarovsky E."/>
            <person name="Zhu S."/>
            <person name="Zimmer A."/>
            <person name="Hide W."/>
            <person name="Bult C."/>
            <person name="Grimmond S.M."/>
            <person name="Teasdale R.D."/>
            <person name="Liu E.T."/>
            <person name="Brusic V."/>
            <person name="Quackenbush J."/>
            <person name="Wahlestedt C."/>
            <person name="Mattick J.S."/>
            <person name="Hume D.A."/>
            <person name="Kai C."/>
            <person name="Sasaki D."/>
            <person name="Tomaru Y."/>
            <person name="Fukuda S."/>
            <person name="Kanamori-Katayama M."/>
            <person name="Suzuki M."/>
            <person name="Aoki J."/>
            <person name="Arakawa T."/>
            <person name="Iida J."/>
            <person name="Imamura K."/>
            <person name="Itoh M."/>
            <person name="Kato T."/>
            <person name="Kawaji H."/>
            <person name="Kawagashira N."/>
            <person name="Kawashima T."/>
            <person name="Kojima M."/>
            <person name="Kondo S."/>
            <person name="Konno H."/>
            <person name="Nakano K."/>
            <person name="Ninomiya N."/>
            <person name="Nishio T."/>
            <person name="Okada M."/>
            <person name="Plessy C."/>
            <person name="Shibata K."/>
            <person name="Shiraki T."/>
            <person name="Suzuki S."/>
            <person name="Tagami M."/>
            <person name="Waki K."/>
            <person name="Watahiki A."/>
            <person name="Okamura-Oho Y."/>
            <person name="Suzuki H."/>
            <person name="Kawai J."/>
            <person name="Hayashizaki Y."/>
        </authorList>
    </citation>
    <scope>NUCLEOTIDE SEQUENCE [LARGE SCALE MRNA]</scope>
    <source>
        <strain>C57BL/6J</strain>
    </source>
</reference>
<reference key="4">
    <citation type="journal article" date="2004" name="Genome Res.">
        <title>The status, quality, and expansion of the NIH full-length cDNA project: the Mammalian Gene Collection (MGC).</title>
        <authorList>
            <consortium name="The MGC Project Team"/>
        </authorList>
    </citation>
    <scope>NUCLEOTIDE SEQUENCE [LARGE SCALE MRNA]</scope>
    <source>
        <strain>Czech II</strain>
        <tissue>Mammary tumor</tissue>
    </source>
</reference>
<reference key="5">
    <citation type="journal article" date="2010" name="Cell">
        <title>A tissue-specific atlas of mouse protein phosphorylation and expression.</title>
        <authorList>
            <person name="Huttlin E.L."/>
            <person name="Jedrychowski M.P."/>
            <person name="Elias J.E."/>
            <person name="Goswami T."/>
            <person name="Rad R."/>
            <person name="Beausoleil S.A."/>
            <person name="Villen J."/>
            <person name="Haas W."/>
            <person name="Sowa M.E."/>
            <person name="Gygi S.P."/>
        </authorList>
    </citation>
    <scope>IDENTIFICATION BY MASS SPECTROMETRY [LARGE SCALE ANALYSIS]</scope>
    <source>
        <tissue>Brain</tissue>
        <tissue>Kidney</tissue>
        <tissue>Lung</tissue>
        <tissue>Spleen</tissue>
        <tissue>Testis</tissue>
    </source>
</reference>
<protein>
    <recommendedName>
        <fullName>N-acetylgalactosamine-6-sulfatase</fullName>
        <ecNumber>3.1.6.4</ecNumber>
    </recommendedName>
    <alternativeName>
        <fullName>Chondroitinsulfatase</fullName>
        <shortName>Chondroitinase</shortName>
    </alternativeName>
    <alternativeName>
        <fullName>Galactose-6-sulfate sulfatase</fullName>
    </alternativeName>
    <alternativeName>
        <fullName>N-acetylgalactosamine-6-sulfate sulfatase</fullName>
        <shortName>GalNAc6S sulfatase</shortName>
    </alternativeName>
</protein>
<organism>
    <name type="scientific">Mus musculus</name>
    <name type="common">Mouse</name>
    <dbReference type="NCBI Taxonomy" id="10090"/>
    <lineage>
        <taxon>Eukaryota</taxon>
        <taxon>Metazoa</taxon>
        <taxon>Chordata</taxon>
        <taxon>Craniata</taxon>
        <taxon>Vertebrata</taxon>
        <taxon>Euteleostomi</taxon>
        <taxon>Mammalia</taxon>
        <taxon>Eutheria</taxon>
        <taxon>Euarchontoglires</taxon>
        <taxon>Glires</taxon>
        <taxon>Rodentia</taxon>
        <taxon>Myomorpha</taxon>
        <taxon>Muroidea</taxon>
        <taxon>Muridae</taxon>
        <taxon>Murinae</taxon>
        <taxon>Mus</taxon>
        <taxon>Mus</taxon>
    </lineage>
</organism>
<accession>Q571E4</accession>
<accession>Q3TWQ4</accession>
<accession>Q99KU8</accession>
<accession>Q9JHK9</accession>
<gene>
    <name type="primary">Galns</name>
</gene>
<keyword id="KW-0106">Calcium</keyword>
<keyword id="KW-1015">Disulfide bond</keyword>
<keyword id="KW-0325">Glycoprotein</keyword>
<keyword id="KW-0378">Hydrolase</keyword>
<keyword id="KW-0458">Lysosome</keyword>
<keyword id="KW-0479">Metal-binding</keyword>
<keyword id="KW-1185">Reference proteome</keyword>
<keyword id="KW-0732">Signal</keyword>
<evidence type="ECO:0000250" key="1"/>
<evidence type="ECO:0000250" key="2">
    <source>
        <dbReference type="UniProtKB" id="P15289"/>
    </source>
</evidence>
<evidence type="ECO:0000255" key="3"/>
<evidence type="ECO:0000269" key="4">
    <source>
    </source>
</evidence>
<evidence type="ECO:0000305" key="5"/>